<name>RS18_SALTO</name>
<organism>
    <name type="scientific">Salinispora tropica (strain ATCC BAA-916 / DSM 44818 / JCM 13857 / NBRC 105044 / CNB-440)</name>
    <dbReference type="NCBI Taxonomy" id="369723"/>
    <lineage>
        <taxon>Bacteria</taxon>
        <taxon>Bacillati</taxon>
        <taxon>Actinomycetota</taxon>
        <taxon>Actinomycetes</taxon>
        <taxon>Micromonosporales</taxon>
        <taxon>Micromonosporaceae</taxon>
        <taxon>Salinispora</taxon>
    </lineage>
</organism>
<accession>A4XDG6</accession>
<reference key="1">
    <citation type="journal article" date="2007" name="Proc. Natl. Acad. Sci. U.S.A.">
        <title>Genome sequencing reveals complex secondary metabolome in the marine actinomycete Salinispora tropica.</title>
        <authorList>
            <person name="Udwary D.W."/>
            <person name="Zeigler L."/>
            <person name="Asolkar R.N."/>
            <person name="Singan V."/>
            <person name="Lapidus A."/>
            <person name="Fenical W."/>
            <person name="Jensen P.R."/>
            <person name="Moore B.S."/>
        </authorList>
    </citation>
    <scope>NUCLEOTIDE SEQUENCE [LARGE SCALE GENOMIC DNA]</scope>
    <source>
        <strain>ATCC BAA-916 / DSM 44818 / JCM 13857 / NBRC 105044 / CNB-440</strain>
    </source>
</reference>
<gene>
    <name evidence="1" type="primary">rpsR</name>
    <name type="ordered locus">Strop_4554</name>
</gene>
<dbReference type="EMBL" id="CP000667">
    <property type="protein sequence ID" value="ABP56982.1"/>
    <property type="molecule type" value="Genomic_DNA"/>
</dbReference>
<dbReference type="SMR" id="A4XDG6"/>
<dbReference type="STRING" id="369723.Strop_4554"/>
<dbReference type="KEGG" id="stp:Strop_4554"/>
<dbReference type="eggNOG" id="COG0238">
    <property type="taxonomic scope" value="Bacteria"/>
</dbReference>
<dbReference type="HOGENOM" id="CLU_148710_1_0_11"/>
<dbReference type="Proteomes" id="UP000000235">
    <property type="component" value="Chromosome"/>
</dbReference>
<dbReference type="GO" id="GO:0022627">
    <property type="term" value="C:cytosolic small ribosomal subunit"/>
    <property type="evidence" value="ECO:0007669"/>
    <property type="project" value="TreeGrafter"/>
</dbReference>
<dbReference type="GO" id="GO:0070181">
    <property type="term" value="F:small ribosomal subunit rRNA binding"/>
    <property type="evidence" value="ECO:0007669"/>
    <property type="project" value="TreeGrafter"/>
</dbReference>
<dbReference type="GO" id="GO:0003735">
    <property type="term" value="F:structural constituent of ribosome"/>
    <property type="evidence" value="ECO:0007669"/>
    <property type="project" value="InterPro"/>
</dbReference>
<dbReference type="GO" id="GO:0006412">
    <property type="term" value="P:translation"/>
    <property type="evidence" value="ECO:0007669"/>
    <property type="project" value="UniProtKB-UniRule"/>
</dbReference>
<dbReference type="FunFam" id="4.10.640.10:FF:000016">
    <property type="entry name" value="30S ribosomal protein S18"/>
    <property type="match status" value="1"/>
</dbReference>
<dbReference type="Gene3D" id="4.10.640.10">
    <property type="entry name" value="Ribosomal protein S18"/>
    <property type="match status" value="1"/>
</dbReference>
<dbReference type="HAMAP" id="MF_00270">
    <property type="entry name" value="Ribosomal_bS18"/>
    <property type="match status" value="1"/>
</dbReference>
<dbReference type="InterPro" id="IPR001648">
    <property type="entry name" value="Ribosomal_bS18"/>
</dbReference>
<dbReference type="InterPro" id="IPR018275">
    <property type="entry name" value="Ribosomal_bS18_CS"/>
</dbReference>
<dbReference type="InterPro" id="IPR036870">
    <property type="entry name" value="Ribosomal_bS18_sf"/>
</dbReference>
<dbReference type="NCBIfam" id="TIGR00165">
    <property type="entry name" value="S18"/>
    <property type="match status" value="1"/>
</dbReference>
<dbReference type="PANTHER" id="PTHR13479">
    <property type="entry name" value="30S RIBOSOMAL PROTEIN S18"/>
    <property type="match status" value="1"/>
</dbReference>
<dbReference type="PANTHER" id="PTHR13479:SF40">
    <property type="entry name" value="SMALL RIBOSOMAL SUBUNIT PROTEIN BS18M"/>
    <property type="match status" value="1"/>
</dbReference>
<dbReference type="Pfam" id="PF01084">
    <property type="entry name" value="Ribosomal_S18"/>
    <property type="match status" value="1"/>
</dbReference>
<dbReference type="PRINTS" id="PR00974">
    <property type="entry name" value="RIBOSOMALS18"/>
</dbReference>
<dbReference type="SUPFAM" id="SSF46911">
    <property type="entry name" value="Ribosomal protein S18"/>
    <property type="match status" value="1"/>
</dbReference>
<dbReference type="PROSITE" id="PS00057">
    <property type="entry name" value="RIBOSOMAL_S18"/>
    <property type="match status" value="1"/>
</dbReference>
<evidence type="ECO:0000255" key="1">
    <source>
        <dbReference type="HAMAP-Rule" id="MF_00270"/>
    </source>
</evidence>
<evidence type="ECO:0000256" key="2">
    <source>
        <dbReference type="SAM" id="MobiDB-lite"/>
    </source>
</evidence>
<evidence type="ECO:0000305" key="3"/>
<protein>
    <recommendedName>
        <fullName evidence="1">Small ribosomal subunit protein bS18</fullName>
    </recommendedName>
    <alternativeName>
        <fullName evidence="3">30S ribosomal protein S18</fullName>
    </alternativeName>
</protein>
<proteinExistence type="inferred from homology"/>
<feature type="chain" id="PRO_0000345545" description="Small ribosomal subunit protein bS18">
    <location>
        <begin position="1"/>
        <end position="93"/>
    </location>
</feature>
<feature type="region of interest" description="Disordered" evidence="2">
    <location>
        <begin position="1"/>
        <end position="27"/>
    </location>
</feature>
<feature type="compositionally biased region" description="Basic residues" evidence="2">
    <location>
        <begin position="1"/>
        <end position="11"/>
    </location>
</feature>
<sequence length="93" mass="10424">MAPSARNRKPGARSMAKAAALRKPKKKVNPLDKDGITYIDYKDTALLRKFISDRGKIRARRVTGVTSQQQRQIARAVKNAREMALLPYTATAR</sequence>
<comment type="function">
    <text evidence="1">Binds as a heterodimer with protein bS6 to the central domain of the 16S rRNA, where it helps stabilize the platform of the 30S subunit.</text>
</comment>
<comment type="subunit">
    <text evidence="1">Part of the 30S ribosomal subunit. Forms a tight heterodimer with protein bS6.</text>
</comment>
<comment type="similarity">
    <text evidence="1">Belongs to the bacterial ribosomal protein bS18 family.</text>
</comment>
<keyword id="KW-1185">Reference proteome</keyword>
<keyword id="KW-0687">Ribonucleoprotein</keyword>
<keyword id="KW-0689">Ribosomal protein</keyword>
<keyword id="KW-0694">RNA-binding</keyword>
<keyword id="KW-0699">rRNA-binding</keyword>